<accession>Q8VZT3</accession>
<accession>Q9MA53</accession>
<accession>Q9SCW6</accession>
<feature type="chain" id="PRO_0000259862" description="Sugar transporter ERD6-like 12">
    <location>
        <begin position="1"/>
        <end position="462"/>
    </location>
</feature>
<feature type="transmembrane region" description="Helical; Name=1" evidence="2">
    <location>
        <begin position="25"/>
        <end position="45"/>
    </location>
</feature>
<feature type="transmembrane region" description="Helical; Name=2" evidence="2">
    <location>
        <begin position="62"/>
        <end position="82"/>
    </location>
</feature>
<feature type="transmembrane region" description="Helical; Name=3" evidence="2">
    <location>
        <begin position="101"/>
        <end position="121"/>
    </location>
</feature>
<feature type="transmembrane region" description="Helical; Name=4" evidence="2">
    <location>
        <begin position="124"/>
        <end position="144"/>
    </location>
</feature>
<feature type="transmembrane region" description="Helical; Name=5" evidence="2">
    <location>
        <begin position="151"/>
        <end position="171"/>
    </location>
</feature>
<feature type="transmembrane region" description="Helical; Name=6" evidence="2">
    <location>
        <begin position="179"/>
        <end position="199"/>
    </location>
</feature>
<feature type="transmembrane region" description="Helical; Name=7" evidence="2">
    <location>
        <begin position="262"/>
        <end position="282"/>
    </location>
</feature>
<feature type="transmembrane region" description="Helical; Name=8" evidence="2">
    <location>
        <begin position="297"/>
        <end position="317"/>
    </location>
</feature>
<feature type="transmembrane region" description="Helical; Name=9" evidence="2">
    <location>
        <begin position="326"/>
        <end position="346"/>
    </location>
</feature>
<feature type="transmembrane region" description="Helical; Name=10" evidence="2">
    <location>
        <begin position="358"/>
        <end position="378"/>
    </location>
</feature>
<feature type="transmembrane region" description="Helical; Name=11" evidence="2">
    <location>
        <begin position="399"/>
        <end position="419"/>
    </location>
</feature>
<feature type="transmembrane region" description="Helical; Name=12" evidence="2">
    <location>
        <begin position="424"/>
        <end position="444"/>
    </location>
</feature>
<gene>
    <name type="primary">SUGTL5</name>
    <name type="ordered locus">At3g05400</name>
    <name type="ORF">F22F7.16</name>
</gene>
<comment type="function">
    <text evidence="3">Sugar transporter.</text>
</comment>
<comment type="subcellular location">
    <subcellularLocation>
        <location evidence="1">Membrane</location>
        <topology evidence="1">Multi-pass membrane protein</topology>
    </subcellularLocation>
</comment>
<comment type="alternative products">
    <event type="alternative splicing"/>
    <isoform>
        <id>Q8VZT3-1</id>
        <name>1</name>
        <sequence type="displayed"/>
    </isoform>
    <text>A number of isoforms are produced. According to EST sequences.</text>
</comment>
<comment type="similarity">
    <text evidence="3">Belongs to the major facilitator superfamily. Sugar transporter (TC 2.A.1.1) family.</text>
</comment>
<comment type="sequence caution" evidence="3">
    <conflict type="erroneous gene model prediction">
        <sequence resource="EMBL-CDS" id="AAF64542"/>
    </conflict>
</comment>
<name>EDL12_ARATH</name>
<dbReference type="EMBL" id="AC009606">
    <property type="protein sequence ID" value="AAF64542.1"/>
    <property type="status" value="ALT_SEQ"/>
    <property type="molecule type" value="Genomic_DNA"/>
</dbReference>
<dbReference type="EMBL" id="CP002686">
    <property type="protein sequence ID" value="AEE74233.1"/>
    <property type="molecule type" value="Genomic_DNA"/>
</dbReference>
<dbReference type="EMBL" id="AY063856">
    <property type="protein sequence ID" value="AAL36212.1"/>
    <property type="molecule type" value="mRNA"/>
</dbReference>
<dbReference type="EMBL" id="AY091216">
    <property type="protein sequence ID" value="AAM14155.1"/>
    <property type="molecule type" value="mRNA"/>
</dbReference>
<dbReference type="EMBL" id="AJ249971">
    <property type="protein sequence ID" value="CAB64736.1"/>
    <property type="molecule type" value="mRNA"/>
</dbReference>
<dbReference type="RefSeq" id="NP_187191.2">
    <molecule id="Q8VZT3-1"/>
    <property type="nucleotide sequence ID" value="NM_111413.5"/>
</dbReference>
<dbReference type="SMR" id="Q8VZT3"/>
<dbReference type="BioGRID" id="5039">
    <property type="interactions" value="3"/>
</dbReference>
<dbReference type="FunCoup" id="Q8VZT3">
    <property type="interactions" value="669"/>
</dbReference>
<dbReference type="IntAct" id="Q8VZT3">
    <property type="interactions" value="1"/>
</dbReference>
<dbReference type="STRING" id="3702.Q8VZT3"/>
<dbReference type="PaxDb" id="3702-AT3G05400.1"/>
<dbReference type="ProteomicsDB" id="222060">
    <molecule id="Q8VZT3-1"/>
</dbReference>
<dbReference type="EnsemblPlants" id="AT3G05400.1">
    <molecule id="Q8VZT3-1"/>
    <property type="protein sequence ID" value="AT3G05400.1"/>
    <property type="gene ID" value="AT3G05400"/>
</dbReference>
<dbReference type="GeneID" id="819704"/>
<dbReference type="Gramene" id="AT3G05400.1">
    <molecule id="Q8VZT3-1"/>
    <property type="protein sequence ID" value="AT3G05400.1"/>
    <property type="gene ID" value="AT3G05400"/>
</dbReference>
<dbReference type="KEGG" id="ath:AT3G05400"/>
<dbReference type="Araport" id="AT3G05400"/>
<dbReference type="TAIR" id="AT3G05400"/>
<dbReference type="eggNOG" id="KOG0254">
    <property type="taxonomic scope" value="Eukaryota"/>
</dbReference>
<dbReference type="InParanoid" id="Q8VZT3"/>
<dbReference type="OMA" id="MYSAEMT"/>
<dbReference type="PhylomeDB" id="Q8VZT3"/>
<dbReference type="PRO" id="PR:Q8VZT3"/>
<dbReference type="Proteomes" id="UP000006548">
    <property type="component" value="Chromosome 3"/>
</dbReference>
<dbReference type="ExpressionAtlas" id="Q8VZT3">
    <property type="expression patterns" value="baseline and differential"/>
</dbReference>
<dbReference type="GO" id="GO:0016020">
    <property type="term" value="C:membrane"/>
    <property type="evidence" value="ECO:0007669"/>
    <property type="project" value="UniProtKB-SubCell"/>
</dbReference>
<dbReference type="GO" id="GO:0051119">
    <property type="term" value="F:sugar transmembrane transporter activity"/>
    <property type="evidence" value="ECO:0007669"/>
    <property type="project" value="InterPro"/>
</dbReference>
<dbReference type="CDD" id="cd17358">
    <property type="entry name" value="MFS_GLUT6_8_Class3_like"/>
    <property type="match status" value="1"/>
</dbReference>
<dbReference type="FunFam" id="1.20.1250.20:FF:000043">
    <property type="entry name" value="sugar transporter ERD6-like 6"/>
    <property type="match status" value="1"/>
</dbReference>
<dbReference type="Gene3D" id="1.20.1250.20">
    <property type="entry name" value="MFS general substrate transporter like domains"/>
    <property type="match status" value="1"/>
</dbReference>
<dbReference type="InterPro" id="IPR020846">
    <property type="entry name" value="MFS_dom"/>
</dbReference>
<dbReference type="InterPro" id="IPR044775">
    <property type="entry name" value="MFS_ERD6/Tret1-like"/>
</dbReference>
<dbReference type="InterPro" id="IPR005828">
    <property type="entry name" value="MFS_sugar_transport-like"/>
</dbReference>
<dbReference type="InterPro" id="IPR036259">
    <property type="entry name" value="MFS_trans_sf"/>
</dbReference>
<dbReference type="InterPro" id="IPR050549">
    <property type="entry name" value="MFS_Trehalose_Transporter"/>
</dbReference>
<dbReference type="InterPro" id="IPR003663">
    <property type="entry name" value="Sugar/inositol_transpt"/>
</dbReference>
<dbReference type="InterPro" id="IPR005829">
    <property type="entry name" value="Sugar_transporter_CS"/>
</dbReference>
<dbReference type="NCBIfam" id="TIGR00879">
    <property type="entry name" value="SP"/>
    <property type="match status" value="1"/>
</dbReference>
<dbReference type="PANTHER" id="PTHR48021">
    <property type="match status" value="1"/>
</dbReference>
<dbReference type="PANTHER" id="PTHR48021:SF11">
    <property type="entry name" value="SUGAR TRANSPORTER ERD6-LIKE 12"/>
    <property type="match status" value="1"/>
</dbReference>
<dbReference type="Pfam" id="PF00083">
    <property type="entry name" value="Sugar_tr"/>
    <property type="match status" value="1"/>
</dbReference>
<dbReference type="PRINTS" id="PR00171">
    <property type="entry name" value="SUGRTRNSPORT"/>
</dbReference>
<dbReference type="SUPFAM" id="SSF103473">
    <property type="entry name" value="MFS general substrate transporter"/>
    <property type="match status" value="1"/>
</dbReference>
<dbReference type="PROSITE" id="PS50850">
    <property type="entry name" value="MFS"/>
    <property type="match status" value="1"/>
</dbReference>
<dbReference type="PROSITE" id="PS00216">
    <property type="entry name" value="SUGAR_TRANSPORT_1"/>
    <property type="match status" value="1"/>
</dbReference>
<dbReference type="PROSITE" id="PS00217">
    <property type="entry name" value="SUGAR_TRANSPORT_2"/>
    <property type="match status" value="1"/>
</dbReference>
<evidence type="ECO:0000250" key="1"/>
<evidence type="ECO:0000255" key="2"/>
<evidence type="ECO:0000305" key="3"/>
<keyword id="KW-0025">Alternative splicing</keyword>
<keyword id="KW-0472">Membrane</keyword>
<keyword id="KW-1185">Reference proteome</keyword>
<keyword id="KW-0762">Sugar transport</keyword>
<keyword id="KW-0812">Transmembrane</keyword>
<keyword id="KW-1133">Transmembrane helix</keyword>
<keyword id="KW-0813">Transport</keyword>
<reference key="1">
    <citation type="journal article" date="2000" name="Nature">
        <title>Sequence and analysis of chromosome 3 of the plant Arabidopsis thaliana.</title>
        <authorList>
            <person name="Salanoubat M."/>
            <person name="Lemcke K."/>
            <person name="Rieger M."/>
            <person name="Ansorge W."/>
            <person name="Unseld M."/>
            <person name="Fartmann B."/>
            <person name="Valle G."/>
            <person name="Bloecker H."/>
            <person name="Perez-Alonso M."/>
            <person name="Obermaier B."/>
            <person name="Delseny M."/>
            <person name="Boutry M."/>
            <person name="Grivell L.A."/>
            <person name="Mache R."/>
            <person name="Puigdomenech P."/>
            <person name="De Simone V."/>
            <person name="Choisne N."/>
            <person name="Artiguenave F."/>
            <person name="Robert C."/>
            <person name="Brottier P."/>
            <person name="Wincker P."/>
            <person name="Cattolico L."/>
            <person name="Weissenbach J."/>
            <person name="Saurin W."/>
            <person name="Quetier F."/>
            <person name="Schaefer M."/>
            <person name="Mueller-Auer S."/>
            <person name="Gabel C."/>
            <person name="Fuchs M."/>
            <person name="Benes V."/>
            <person name="Wurmbach E."/>
            <person name="Drzonek H."/>
            <person name="Erfle H."/>
            <person name="Jordan N."/>
            <person name="Bangert S."/>
            <person name="Wiedelmann R."/>
            <person name="Kranz H."/>
            <person name="Voss H."/>
            <person name="Holland R."/>
            <person name="Brandt P."/>
            <person name="Nyakatura G."/>
            <person name="Vezzi A."/>
            <person name="D'Angelo M."/>
            <person name="Pallavicini A."/>
            <person name="Toppo S."/>
            <person name="Simionati B."/>
            <person name="Conrad A."/>
            <person name="Hornischer K."/>
            <person name="Kauer G."/>
            <person name="Loehnert T.-H."/>
            <person name="Nordsiek G."/>
            <person name="Reichelt J."/>
            <person name="Scharfe M."/>
            <person name="Schoen O."/>
            <person name="Bargues M."/>
            <person name="Terol J."/>
            <person name="Climent J."/>
            <person name="Navarro P."/>
            <person name="Collado C."/>
            <person name="Perez-Perez A."/>
            <person name="Ottenwaelder B."/>
            <person name="Duchemin D."/>
            <person name="Cooke R."/>
            <person name="Laudie M."/>
            <person name="Berger-Llauro C."/>
            <person name="Purnelle B."/>
            <person name="Masuy D."/>
            <person name="de Haan M."/>
            <person name="Maarse A.C."/>
            <person name="Alcaraz J.-P."/>
            <person name="Cottet A."/>
            <person name="Casacuberta E."/>
            <person name="Monfort A."/>
            <person name="Argiriou A."/>
            <person name="Flores M."/>
            <person name="Liguori R."/>
            <person name="Vitale D."/>
            <person name="Mannhaupt G."/>
            <person name="Haase D."/>
            <person name="Schoof H."/>
            <person name="Rudd S."/>
            <person name="Zaccaria P."/>
            <person name="Mewes H.-W."/>
            <person name="Mayer K.F.X."/>
            <person name="Kaul S."/>
            <person name="Town C.D."/>
            <person name="Koo H.L."/>
            <person name="Tallon L.J."/>
            <person name="Jenkins J."/>
            <person name="Rooney T."/>
            <person name="Rizzo M."/>
            <person name="Walts A."/>
            <person name="Utterback T."/>
            <person name="Fujii C.Y."/>
            <person name="Shea T.P."/>
            <person name="Creasy T.H."/>
            <person name="Haas B."/>
            <person name="Maiti R."/>
            <person name="Wu D."/>
            <person name="Peterson J."/>
            <person name="Van Aken S."/>
            <person name="Pai G."/>
            <person name="Militscher J."/>
            <person name="Sellers P."/>
            <person name="Gill J.E."/>
            <person name="Feldblyum T.V."/>
            <person name="Preuss D."/>
            <person name="Lin X."/>
            <person name="Nierman W.C."/>
            <person name="Salzberg S.L."/>
            <person name="White O."/>
            <person name="Venter J.C."/>
            <person name="Fraser C.M."/>
            <person name="Kaneko T."/>
            <person name="Nakamura Y."/>
            <person name="Sato S."/>
            <person name="Kato T."/>
            <person name="Asamizu E."/>
            <person name="Sasamoto S."/>
            <person name="Kimura T."/>
            <person name="Idesawa K."/>
            <person name="Kawashima K."/>
            <person name="Kishida Y."/>
            <person name="Kiyokawa C."/>
            <person name="Kohara M."/>
            <person name="Matsumoto M."/>
            <person name="Matsuno A."/>
            <person name="Muraki A."/>
            <person name="Nakayama S."/>
            <person name="Nakazaki N."/>
            <person name="Shinpo S."/>
            <person name="Takeuchi C."/>
            <person name="Wada T."/>
            <person name="Watanabe A."/>
            <person name="Yamada M."/>
            <person name="Yasuda M."/>
            <person name="Tabata S."/>
        </authorList>
    </citation>
    <scope>NUCLEOTIDE SEQUENCE [LARGE SCALE GENOMIC DNA]</scope>
    <source>
        <strain>cv. Columbia</strain>
    </source>
</reference>
<reference key="2">
    <citation type="journal article" date="2017" name="Plant J.">
        <title>Araport11: a complete reannotation of the Arabidopsis thaliana reference genome.</title>
        <authorList>
            <person name="Cheng C.Y."/>
            <person name="Krishnakumar V."/>
            <person name="Chan A.P."/>
            <person name="Thibaud-Nissen F."/>
            <person name="Schobel S."/>
            <person name="Town C.D."/>
        </authorList>
    </citation>
    <scope>GENOME REANNOTATION</scope>
    <source>
        <strain>cv. Columbia</strain>
    </source>
</reference>
<reference key="3">
    <citation type="journal article" date="2003" name="Science">
        <title>Empirical analysis of transcriptional activity in the Arabidopsis genome.</title>
        <authorList>
            <person name="Yamada K."/>
            <person name="Lim J."/>
            <person name="Dale J.M."/>
            <person name="Chen H."/>
            <person name="Shinn P."/>
            <person name="Palm C.J."/>
            <person name="Southwick A.M."/>
            <person name="Wu H.C."/>
            <person name="Kim C.J."/>
            <person name="Nguyen M."/>
            <person name="Pham P.K."/>
            <person name="Cheuk R.F."/>
            <person name="Karlin-Newmann G."/>
            <person name="Liu S.X."/>
            <person name="Lam B."/>
            <person name="Sakano H."/>
            <person name="Wu T."/>
            <person name="Yu G."/>
            <person name="Miranda M."/>
            <person name="Quach H.L."/>
            <person name="Tripp M."/>
            <person name="Chang C.H."/>
            <person name="Lee J.M."/>
            <person name="Toriumi M.J."/>
            <person name="Chan M.M."/>
            <person name="Tang C.C."/>
            <person name="Onodera C.S."/>
            <person name="Deng J.M."/>
            <person name="Akiyama K."/>
            <person name="Ansari Y."/>
            <person name="Arakawa T."/>
            <person name="Banh J."/>
            <person name="Banno F."/>
            <person name="Bowser L."/>
            <person name="Brooks S.Y."/>
            <person name="Carninci P."/>
            <person name="Chao Q."/>
            <person name="Choy N."/>
            <person name="Enju A."/>
            <person name="Goldsmith A.D."/>
            <person name="Gurjal M."/>
            <person name="Hansen N.F."/>
            <person name="Hayashizaki Y."/>
            <person name="Johnson-Hopson C."/>
            <person name="Hsuan V.W."/>
            <person name="Iida K."/>
            <person name="Karnes M."/>
            <person name="Khan S."/>
            <person name="Koesema E."/>
            <person name="Ishida J."/>
            <person name="Jiang P.X."/>
            <person name="Jones T."/>
            <person name="Kawai J."/>
            <person name="Kamiya A."/>
            <person name="Meyers C."/>
            <person name="Nakajima M."/>
            <person name="Narusaka M."/>
            <person name="Seki M."/>
            <person name="Sakurai T."/>
            <person name="Satou M."/>
            <person name="Tamse R."/>
            <person name="Vaysberg M."/>
            <person name="Wallender E.K."/>
            <person name="Wong C."/>
            <person name="Yamamura Y."/>
            <person name="Yuan S."/>
            <person name="Shinozaki K."/>
            <person name="Davis R.W."/>
            <person name="Theologis A."/>
            <person name="Ecker J.R."/>
        </authorList>
    </citation>
    <scope>NUCLEOTIDE SEQUENCE [LARGE SCALE MRNA]</scope>
    <source>
        <strain>cv. Columbia</strain>
    </source>
</reference>
<reference key="4">
    <citation type="submission" date="1999-10" db="EMBL/GenBank/DDBJ databases">
        <title>A novel multigene family in Arabidopsis thaliana coding for putative sugar transporters.</title>
        <authorList>
            <person name="Gy I."/>
            <person name="Kreis M."/>
            <person name="Lecharny A."/>
        </authorList>
    </citation>
    <scope>NUCLEOTIDE SEQUENCE [MRNA] OF 124-462</scope>
</reference>
<reference key="5">
    <citation type="journal article" date="2006" name="BMC Evol. Biol.">
        <title>The monosaccharide transporter gene family in land plants is ancient and shows differential subfamily expression and expansion across lineages.</title>
        <authorList>
            <person name="Johnson D.A."/>
            <person name="Hill J.P."/>
            <person name="Thomas M.A."/>
        </authorList>
    </citation>
    <scope>GENE FAMILY</scope>
</reference>
<proteinExistence type="evidence at transcript level"/>
<organism>
    <name type="scientific">Arabidopsis thaliana</name>
    <name type="common">Mouse-ear cress</name>
    <dbReference type="NCBI Taxonomy" id="3702"/>
    <lineage>
        <taxon>Eukaryota</taxon>
        <taxon>Viridiplantae</taxon>
        <taxon>Streptophyta</taxon>
        <taxon>Embryophyta</taxon>
        <taxon>Tracheophyta</taxon>
        <taxon>Spermatophyta</taxon>
        <taxon>Magnoliopsida</taxon>
        <taxon>eudicotyledons</taxon>
        <taxon>Gunneridae</taxon>
        <taxon>Pentapetalae</taxon>
        <taxon>rosids</taxon>
        <taxon>malvids</taxon>
        <taxon>Brassicales</taxon>
        <taxon>Brassicaceae</taxon>
        <taxon>Camelineae</taxon>
        <taxon>Arabidopsis</taxon>
    </lineage>
</organism>
<sequence>MEGENNMEKGLLLAKKEDSANTTPLLIFSTFIIVSASFTFGAAIGYTADTMSSIMSDLDLSLAQFSLFGSLSTFGGMIGAIFSAKAASAFGHKMTLWVADLFCITGWLAISLAKDIIWLDMGRFLVGIGVGLISYVVPVYIAEITPKHVRGAFTFSNQLLQNCGVAVVYYFGNFLSWRTLAIIGSIPCWIQVIGLFFIPESPRWLAKKGRDKECEEVLQKLRGRKYDIVPEACEIKISVEASKKNSNINIRSLFEKRYAHQLTIGIGLMLLQQLCGTAGISSYGSTLFKLAGFPARIGMMVLSLIVVPKSLMGLILVDRWGRRPLLMTSALGLCLSCITLAVAFGVKDVPGIGKITPIFCFIGILSFTMMFAIGMGALPWIIMSEIFPMDIKVLAGSLVTIANWFTGWIANYAFNFMLVWSPSGTFIISAIICGATIVFTWCLVPETRRLTLEEIQLSFVNV</sequence>
<protein>
    <recommendedName>
        <fullName>Sugar transporter ERD6-like 12</fullName>
    </recommendedName>
    <alternativeName>
        <fullName>Sugar transporter-like protein 5</fullName>
    </alternativeName>
</protein>